<feature type="chain" id="PRO_0000156820" description="Proteolipid protein 2">
    <location>
        <begin position="1"/>
        <end position="152"/>
    </location>
</feature>
<feature type="transmembrane region" description="Helical" evidence="2">
    <location>
        <begin position="25"/>
        <end position="45"/>
    </location>
</feature>
<feature type="transmembrane region" description="Helical" evidence="2">
    <location>
        <begin position="48"/>
        <end position="68"/>
    </location>
</feature>
<feature type="transmembrane region" description="Helical" evidence="2">
    <location>
        <begin position="85"/>
        <end position="105"/>
    </location>
</feature>
<feature type="transmembrane region" description="Helical" evidence="2">
    <location>
        <begin position="112"/>
        <end position="132"/>
    </location>
</feature>
<feature type="domain" description="MARVEL" evidence="3">
    <location>
        <begin position="19"/>
        <end position="138"/>
    </location>
</feature>
<accession>Q9R1Q7</accession>
<accession>Q3U4I3</accession>
<organism>
    <name type="scientific">Mus musculus</name>
    <name type="common">Mouse</name>
    <dbReference type="NCBI Taxonomy" id="10090"/>
    <lineage>
        <taxon>Eukaryota</taxon>
        <taxon>Metazoa</taxon>
        <taxon>Chordata</taxon>
        <taxon>Craniata</taxon>
        <taxon>Vertebrata</taxon>
        <taxon>Euteleostomi</taxon>
        <taxon>Mammalia</taxon>
        <taxon>Eutheria</taxon>
        <taxon>Euarchontoglires</taxon>
        <taxon>Glires</taxon>
        <taxon>Rodentia</taxon>
        <taxon>Myomorpha</taxon>
        <taxon>Muroidea</taxon>
        <taxon>Muridae</taxon>
        <taxon>Murinae</taxon>
        <taxon>Mus</taxon>
        <taxon>Mus</taxon>
    </lineage>
</organism>
<name>PLP2_MOUSE</name>
<comment type="function">
    <text evidence="1">May play a role in cell differentiation in the intestinal epithelium.</text>
</comment>
<comment type="subcellular location">
    <subcellularLocation>
        <location evidence="1">Membrane</location>
        <topology evidence="1">Multi-pass membrane protein</topology>
    </subcellularLocation>
</comment>
<reference key="1">
    <citation type="submission" date="1999-08" db="EMBL/GenBank/DDBJ databases">
        <title>Mouse proteolipid protein 2 (PLP2).</title>
        <authorList>
            <person name="Hayashi A."/>
            <person name="Hattori A."/>
            <person name="Okaze H."/>
            <person name="Kozuma S."/>
            <person name="Seki N."/>
            <person name="Saito T."/>
        </authorList>
    </citation>
    <scope>NUCLEOTIDE SEQUENCE [MRNA]</scope>
</reference>
<reference key="2">
    <citation type="journal article" date="2005" name="Science">
        <title>The transcriptional landscape of the mammalian genome.</title>
        <authorList>
            <person name="Carninci P."/>
            <person name="Kasukawa T."/>
            <person name="Katayama S."/>
            <person name="Gough J."/>
            <person name="Frith M.C."/>
            <person name="Maeda N."/>
            <person name="Oyama R."/>
            <person name="Ravasi T."/>
            <person name="Lenhard B."/>
            <person name="Wells C."/>
            <person name="Kodzius R."/>
            <person name="Shimokawa K."/>
            <person name="Bajic V.B."/>
            <person name="Brenner S.E."/>
            <person name="Batalov S."/>
            <person name="Forrest A.R."/>
            <person name="Zavolan M."/>
            <person name="Davis M.J."/>
            <person name="Wilming L.G."/>
            <person name="Aidinis V."/>
            <person name="Allen J.E."/>
            <person name="Ambesi-Impiombato A."/>
            <person name="Apweiler R."/>
            <person name="Aturaliya R.N."/>
            <person name="Bailey T.L."/>
            <person name="Bansal M."/>
            <person name="Baxter L."/>
            <person name="Beisel K.W."/>
            <person name="Bersano T."/>
            <person name="Bono H."/>
            <person name="Chalk A.M."/>
            <person name="Chiu K.P."/>
            <person name="Choudhary V."/>
            <person name="Christoffels A."/>
            <person name="Clutterbuck D.R."/>
            <person name="Crowe M.L."/>
            <person name="Dalla E."/>
            <person name="Dalrymple B.P."/>
            <person name="de Bono B."/>
            <person name="Della Gatta G."/>
            <person name="di Bernardo D."/>
            <person name="Down T."/>
            <person name="Engstrom P."/>
            <person name="Fagiolini M."/>
            <person name="Faulkner G."/>
            <person name="Fletcher C.F."/>
            <person name="Fukushima T."/>
            <person name="Furuno M."/>
            <person name="Futaki S."/>
            <person name="Gariboldi M."/>
            <person name="Georgii-Hemming P."/>
            <person name="Gingeras T.R."/>
            <person name="Gojobori T."/>
            <person name="Green R.E."/>
            <person name="Gustincich S."/>
            <person name="Harbers M."/>
            <person name="Hayashi Y."/>
            <person name="Hensch T.K."/>
            <person name="Hirokawa N."/>
            <person name="Hill D."/>
            <person name="Huminiecki L."/>
            <person name="Iacono M."/>
            <person name="Ikeo K."/>
            <person name="Iwama A."/>
            <person name="Ishikawa T."/>
            <person name="Jakt M."/>
            <person name="Kanapin A."/>
            <person name="Katoh M."/>
            <person name="Kawasawa Y."/>
            <person name="Kelso J."/>
            <person name="Kitamura H."/>
            <person name="Kitano H."/>
            <person name="Kollias G."/>
            <person name="Krishnan S.P."/>
            <person name="Kruger A."/>
            <person name="Kummerfeld S.K."/>
            <person name="Kurochkin I.V."/>
            <person name="Lareau L.F."/>
            <person name="Lazarevic D."/>
            <person name="Lipovich L."/>
            <person name="Liu J."/>
            <person name="Liuni S."/>
            <person name="McWilliam S."/>
            <person name="Madan Babu M."/>
            <person name="Madera M."/>
            <person name="Marchionni L."/>
            <person name="Matsuda H."/>
            <person name="Matsuzawa S."/>
            <person name="Miki H."/>
            <person name="Mignone F."/>
            <person name="Miyake S."/>
            <person name="Morris K."/>
            <person name="Mottagui-Tabar S."/>
            <person name="Mulder N."/>
            <person name="Nakano N."/>
            <person name="Nakauchi H."/>
            <person name="Ng P."/>
            <person name="Nilsson R."/>
            <person name="Nishiguchi S."/>
            <person name="Nishikawa S."/>
            <person name="Nori F."/>
            <person name="Ohara O."/>
            <person name="Okazaki Y."/>
            <person name="Orlando V."/>
            <person name="Pang K.C."/>
            <person name="Pavan W.J."/>
            <person name="Pavesi G."/>
            <person name="Pesole G."/>
            <person name="Petrovsky N."/>
            <person name="Piazza S."/>
            <person name="Reed J."/>
            <person name="Reid J.F."/>
            <person name="Ring B.Z."/>
            <person name="Ringwald M."/>
            <person name="Rost B."/>
            <person name="Ruan Y."/>
            <person name="Salzberg S.L."/>
            <person name="Sandelin A."/>
            <person name="Schneider C."/>
            <person name="Schoenbach C."/>
            <person name="Sekiguchi K."/>
            <person name="Semple C.A."/>
            <person name="Seno S."/>
            <person name="Sessa L."/>
            <person name="Sheng Y."/>
            <person name="Shibata Y."/>
            <person name="Shimada H."/>
            <person name="Shimada K."/>
            <person name="Silva D."/>
            <person name="Sinclair B."/>
            <person name="Sperling S."/>
            <person name="Stupka E."/>
            <person name="Sugiura K."/>
            <person name="Sultana R."/>
            <person name="Takenaka Y."/>
            <person name="Taki K."/>
            <person name="Tammoja K."/>
            <person name="Tan S.L."/>
            <person name="Tang S."/>
            <person name="Taylor M.S."/>
            <person name="Tegner J."/>
            <person name="Teichmann S.A."/>
            <person name="Ueda H.R."/>
            <person name="van Nimwegen E."/>
            <person name="Verardo R."/>
            <person name="Wei C.L."/>
            <person name="Yagi K."/>
            <person name="Yamanishi H."/>
            <person name="Zabarovsky E."/>
            <person name="Zhu S."/>
            <person name="Zimmer A."/>
            <person name="Hide W."/>
            <person name="Bult C."/>
            <person name="Grimmond S.M."/>
            <person name="Teasdale R.D."/>
            <person name="Liu E.T."/>
            <person name="Brusic V."/>
            <person name="Quackenbush J."/>
            <person name="Wahlestedt C."/>
            <person name="Mattick J.S."/>
            <person name="Hume D.A."/>
            <person name="Kai C."/>
            <person name="Sasaki D."/>
            <person name="Tomaru Y."/>
            <person name="Fukuda S."/>
            <person name="Kanamori-Katayama M."/>
            <person name="Suzuki M."/>
            <person name="Aoki J."/>
            <person name="Arakawa T."/>
            <person name="Iida J."/>
            <person name="Imamura K."/>
            <person name="Itoh M."/>
            <person name="Kato T."/>
            <person name="Kawaji H."/>
            <person name="Kawagashira N."/>
            <person name="Kawashima T."/>
            <person name="Kojima M."/>
            <person name="Kondo S."/>
            <person name="Konno H."/>
            <person name="Nakano K."/>
            <person name="Ninomiya N."/>
            <person name="Nishio T."/>
            <person name="Okada M."/>
            <person name="Plessy C."/>
            <person name="Shibata K."/>
            <person name="Shiraki T."/>
            <person name="Suzuki S."/>
            <person name="Tagami M."/>
            <person name="Waki K."/>
            <person name="Watahiki A."/>
            <person name="Okamura-Oho Y."/>
            <person name="Suzuki H."/>
            <person name="Kawai J."/>
            <person name="Hayashizaki Y."/>
        </authorList>
    </citation>
    <scope>NUCLEOTIDE SEQUENCE [LARGE SCALE MRNA]</scope>
    <source>
        <strain>C57BL/6J</strain>
        <strain>NOD</strain>
    </source>
</reference>
<reference key="3">
    <citation type="journal article" date="2004" name="Genome Res.">
        <title>The status, quality, and expansion of the NIH full-length cDNA project: the Mammalian Gene Collection (MGC).</title>
        <authorList>
            <consortium name="The MGC Project Team"/>
        </authorList>
    </citation>
    <scope>NUCLEOTIDE SEQUENCE [LARGE SCALE MRNA]</scope>
    <source>
        <strain>FVB/N</strain>
        <tissue>Colon</tissue>
    </source>
</reference>
<reference key="4">
    <citation type="journal article" date="2010" name="Cell">
        <title>A tissue-specific atlas of mouse protein phosphorylation and expression.</title>
        <authorList>
            <person name="Huttlin E.L."/>
            <person name="Jedrychowski M.P."/>
            <person name="Elias J.E."/>
            <person name="Goswami T."/>
            <person name="Rad R."/>
            <person name="Beausoleil S.A."/>
            <person name="Villen J."/>
            <person name="Haas W."/>
            <person name="Sowa M.E."/>
            <person name="Gygi S.P."/>
        </authorList>
    </citation>
    <scope>IDENTIFICATION BY MASS SPECTROMETRY [LARGE SCALE ANALYSIS]</scope>
    <source>
        <tissue>Brain</tissue>
        <tissue>Brown adipose tissue</tissue>
        <tissue>Heart</tissue>
        <tissue>Lung</tissue>
        <tissue>Pancreas</tissue>
        <tissue>Testis</tissue>
    </source>
</reference>
<protein>
    <recommendedName>
        <fullName>Proteolipid protein 2</fullName>
    </recommendedName>
</protein>
<gene>
    <name type="primary">Plp2</name>
</gene>
<proteinExistence type="evidence at protein level"/>
<sequence>MADSERLSAPGCWLACTSFSRTKKGILLFAEIILCLVILICFSASTTSAYSSLSVIEMICAAVLLVFYTCDLHSKISFINWPWTDFFRSLIATILYLITSIVVLVEGRGSSRVVAGILGLLATLLFGYDAYITFPLKQQRHTAAPTDPTDGP</sequence>
<dbReference type="EMBL" id="AB031292">
    <property type="protein sequence ID" value="BAA83500.1"/>
    <property type="molecule type" value="mRNA"/>
</dbReference>
<dbReference type="EMBL" id="AK003522">
    <property type="protein sequence ID" value="BAB22835.1"/>
    <property type="molecule type" value="mRNA"/>
</dbReference>
<dbReference type="EMBL" id="AK011282">
    <property type="protein sequence ID" value="BAB27515.1"/>
    <property type="molecule type" value="mRNA"/>
</dbReference>
<dbReference type="EMBL" id="AK154228">
    <property type="protein sequence ID" value="BAE32448.1"/>
    <property type="molecule type" value="mRNA"/>
</dbReference>
<dbReference type="EMBL" id="BC083078">
    <property type="protein sequence ID" value="AAH83078.1"/>
    <property type="molecule type" value="mRNA"/>
</dbReference>
<dbReference type="CCDS" id="CCDS40842.1"/>
<dbReference type="RefSeq" id="NP_062729.1">
    <property type="nucleotide sequence ID" value="NM_019755.5"/>
</dbReference>
<dbReference type="SMR" id="Q9R1Q7"/>
<dbReference type="BioGRID" id="202255">
    <property type="interactions" value="3"/>
</dbReference>
<dbReference type="FunCoup" id="Q9R1Q7">
    <property type="interactions" value="809"/>
</dbReference>
<dbReference type="IntAct" id="Q9R1Q7">
    <property type="interactions" value="3"/>
</dbReference>
<dbReference type="STRING" id="10090.ENSMUSP00000033486"/>
<dbReference type="iPTMnet" id="Q9R1Q7"/>
<dbReference type="PhosphoSitePlus" id="Q9R1Q7"/>
<dbReference type="SwissPalm" id="Q9R1Q7"/>
<dbReference type="jPOST" id="Q9R1Q7"/>
<dbReference type="PaxDb" id="10090-ENSMUSP00000033486"/>
<dbReference type="ProteomicsDB" id="289450"/>
<dbReference type="Pumba" id="Q9R1Q7"/>
<dbReference type="DNASU" id="18824"/>
<dbReference type="Ensembl" id="ENSMUST00000033486.6">
    <property type="protein sequence ID" value="ENSMUSP00000033486.6"/>
    <property type="gene ID" value="ENSMUSG00000031146.7"/>
</dbReference>
<dbReference type="Ensembl" id="ENSMUST00000071118.7">
    <property type="protein sequence ID" value="ENSMUSP00000132645.3"/>
    <property type="gene ID" value="ENSMUSG00000057762.7"/>
</dbReference>
<dbReference type="GeneID" id="18824"/>
<dbReference type="KEGG" id="mmu:18824"/>
<dbReference type="UCSC" id="uc009slx.1">
    <property type="organism name" value="mouse"/>
</dbReference>
<dbReference type="AGR" id="MGI:1298382"/>
<dbReference type="CTD" id="5355"/>
<dbReference type="MGI" id="MGI:1298382">
    <property type="gene designation" value="Plp2"/>
</dbReference>
<dbReference type="VEuPathDB" id="HostDB:ENSMUSG00000031146"/>
<dbReference type="VEuPathDB" id="HostDB:ENSMUSG00000057762"/>
<dbReference type="eggNOG" id="KOG4788">
    <property type="taxonomic scope" value="Eukaryota"/>
</dbReference>
<dbReference type="GeneTree" id="ENSGT00940000158528"/>
<dbReference type="HOGENOM" id="CLU_108546_4_0_1"/>
<dbReference type="InParanoid" id="Q9R1Q7"/>
<dbReference type="OMA" id="TNFWRTR"/>
<dbReference type="OrthoDB" id="9898022at2759"/>
<dbReference type="PhylomeDB" id="Q9R1Q7"/>
<dbReference type="TreeFam" id="TF317387"/>
<dbReference type="BioGRID-ORCS" id="18824">
    <property type="hits" value="4 hits in 79 CRISPR screens"/>
</dbReference>
<dbReference type="ChiTaRS" id="Plp2">
    <property type="organism name" value="mouse"/>
</dbReference>
<dbReference type="PRO" id="PR:Q9R1Q7"/>
<dbReference type="Proteomes" id="UP000000589">
    <property type="component" value="Chromosome 13"/>
</dbReference>
<dbReference type="Proteomes" id="UP000000589">
    <property type="component" value="Chromosome X"/>
</dbReference>
<dbReference type="RNAct" id="Q9R1Q7">
    <property type="molecule type" value="protein"/>
</dbReference>
<dbReference type="Bgee" id="ENSMUSG00000031146">
    <property type="expression patterns" value="Expressed in granulocyte and 132 other cell types or tissues"/>
</dbReference>
<dbReference type="ExpressionAtlas" id="Q9R1Q7">
    <property type="expression patterns" value="baseline and differential"/>
</dbReference>
<dbReference type="GO" id="GO:0005886">
    <property type="term" value="C:plasma membrane"/>
    <property type="evidence" value="ECO:0000250"/>
    <property type="project" value="UniProtKB"/>
</dbReference>
<dbReference type="GO" id="GO:0019956">
    <property type="term" value="F:chemokine binding"/>
    <property type="evidence" value="ECO:0000250"/>
    <property type="project" value="UniProtKB"/>
</dbReference>
<dbReference type="InterPro" id="IPR008253">
    <property type="entry name" value="Marvel"/>
</dbReference>
<dbReference type="InterPro" id="IPR050578">
    <property type="entry name" value="MARVEL-CKLF_proteins"/>
</dbReference>
<dbReference type="PANTHER" id="PTHR22776">
    <property type="entry name" value="MARVEL-CONTAINING POTENTIAL LIPID RAFT-ASSOCIATED PROTEIN"/>
    <property type="match status" value="1"/>
</dbReference>
<dbReference type="PANTHER" id="PTHR22776:SF4">
    <property type="entry name" value="PROTEOLIPID PROTEIN 2"/>
    <property type="match status" value="1"/>
</dbReference>
<dbReference type="Pfam" id="PF01284">
    <property type="entry name" value="MARVEL"/>
    <property type="match status" value="1"/>
</dbReference>
<dbReference type="PROSITE" id="PS51225">
    <property type="entry name" value="MARVEL"/>
    <property type="match status" value="1"/>
</dbReference>
<evidence type="ECO:0000250" key="1"/>
<evidence type="ECO:0000255" key="2"/>
<evidence type="ECO:0000255" key="3">
    <source>
        <dbReference type="PROSITE-ProRule" id="PRU00581"/>
    </source>
</evidence>
<keyword id="KW-0472">Membrane</keyword>
<keyword id="KW-1185">Reference proteome</keyword>
<keyword id="KW-0812">Transmembrane</keyword>
<keyword id="KW-1133">Transmembrane helix</keyword>